<evidence type="ECO:0000255" key="1">
    <source>
        <dbReference type="HAMAP-Rule" id="MF_01039"/>
    </source>
</evidence>
<organism>
    <name type="scientific">Escherichia coli (strain SMS-3-5 / SECEC)</name>
    <dbReference type="NCBI Taxonomy" id="439855"/>
    <lineage>
        <taxon>Bacteria</taxon>
        <taxon>Pseudomonadati</taxon>
        <taxon>Pseudomonadota</taxon>
        <taxon>Gammaproteobacteria</taxon>
        <taxon>Enterobacterales</taxon>
        <taxon>Enterobacteriaceae</taxon>
        <taxon>Escherichia</taxon>
    </lineage>
</organism>
<protein>
    <recommendedName>
        <fullName evidence="1">2,3-bisphosphoglycerate-dependent phosphoglycerate mutase</fullName>
        <shortName evidence="1">BPG-dependent PGAM</shortName>
        <shortName evidence="1">PGAM</shortName>
        <shortName evidence="1">Phosphoglyceromutase</shortName>
        <shortName evidence="1">dPGM</shortName>
        <ecNumber evidence="1">5.4.2.11</ecNumber>
    </recommendedName>
</protein>
<accession>B1LM46</accession>
<name>GPMA_ECOSM</name>
<keyword id="KW-0312">Gluconeogenesis</keyword>
<keyword id="KW-0324">Glycolysis</keyword>
<keyword id="KW-0413">Isomerase</keyword>
<sequence length="250" mass="28556">MAVTKLVLVRHGESQWNKENRFTGWYDVDLSEKGVSEAKAAGKLLKEEGYSFDFAYTSVLKRAIHTLWNVLDELDQAWLPVEKSWKLNERHYGALQGLNKAETAEKYGDEQVKQWRRGFAVTPPELTKDDERYPGHDPRYAKLSEKELPLTESLALTIDRVIPYWNETILPRMKSGERVIIAAHGNSLRALVKYLDNMSEEEILELNIPTGVPLVYEFDENFKPLKRYYLGNADEIAAKAAAVANQGKAK</sequence>
<gene>
    <name evidence="1" type="primary">gpmA</name>
    <name type="ordered locus">EcSMS35_0778</name>
</gene>
<proteinExistence type="inferred from homology"/>
<feature type="chain" id="PRO_1000135950" description="2,3-bisphosphoglycerate-dependent phosphoglycerate mutase">
    <location>
        <begin position="1"/>
        <end position="250"/>
    </location>
</feature>
<feature type="active site" description="Tele-phosphohistidine intermediate" evidence="1">
    <location>
        <position position="11"/>
    </location>
</feature>
<feature type="active site" description="Proton donor/acceptor" evidence="1">
    <location>
        <position position="89"/>
    </location>
</feature>
<feature type="binding site" evidence="1">
    <location>
        <begin position="10"/>
        <end position="17"/>
    </location>
    <ligand>
        <name>substrate</name>
    </ligand>
</feature>
<feature type="binding site" evidence="1">
    <location>
        <begin position="23"/>
        <end position="24"/>
    </location>
    <ligand>
        <name>substrate</name>
    </ligand>
</feature>
<feature type="binding site" evidence="1">
    <location>
        <position position="62"/>
    </location>
    <ligand>
        <name>substrate</name>
    </ligand>
</feature>
<feature type="binding site" evidence="1">
    <location>
        <begin position="89"/>
        <end position="92"/>
    </location>
    <ligand>
        <name>substrate</name>
    </ligand>
</feature>
<feature type="binding site" evidence="1">
    <location>
        <position position="100"/>
    </location>
    <ligand>
        <name>substrate</name>
    </ligand>
</feature>
<feature type="binding site" evidence="1">
    <location>
        <begin position="116"/>
        <end position="117"/>
    </location>
    <ligand>
        <name>substrate</name>
    </ligand>
</feature>
<feature type="binding site" evidence="1">
    <location>
        <begin position="185"/>
        <end position="186"/>
    </location>
    <ligand>
        <name>substrate</name>
    </ligand>
</feature>
<feature type="site" description="Transition state stabilizer" evidence="1">
    <location>
        <position position="184"/>
    </location>
</feature>
<dbReference type="EC" id="5.4.2.11" evidence="1"/>
<dbReference type="EMBL" id="CP000970">
    <property type="protein sequence ID" value="ACB17040.1"/>
    <property type="molecule type" value="Genomic_DNA"/>
</dbReference>
<dbReference type="RefSeq" id="WP_001295305.1">
    <property type="nucleotide sequence ID" value="NC_010498.1"/>
</dbReference>
<dbReference type="SMR" id="B1LM46"/>
<dbReference type="GeneID" id="93776726"/>
<dbReference type="KEGG" id="ecm:EcSMS35_0778"/>
<dbReference type="HOGENOM" id="CLU_033323_1_1_6"/>
<dbReference type="UniPathway" id="UPA00109">
    <property type="reaction ID" value="UER00186"/>
</dbReference>
<dbReference type="Proteomes" id="UP000007011">
    <property type="component" value="Chromosome"/>
</dbReference>
<dbReference type="GO" id="GO:0004619">
    <property type="term" value="F:phosphoglycerate mutase activity"/>
    <property type="evidence" value="ECO:0007669"/>
    <property type="project" value="UniProtKB-EC"/>
</dbReference>
<dbReference type="GO" id="GO:0006094">
    <property type="term" value="P:gluconeogenesis"/>
    <property type="evidence" value="ECO:0007669"/>
    <property type="project" value="UniProtKB-UniRule"/>
</dbReference>
<dbReference type="GO" id="GO:0006096">
    <property type="term" value="P:glycolytic process"/>
    <property type="evidence" value="ECO:0007669"/>
    <property type="project" value="UniProtKB-UniRule"/>
</dbReference>
<dbReference type="CDD" id="cd07067">
    <property type="entry name" value="HP_PGM_like"/>
    <property type="match status" value="1"/>
</dbReference>
<dbReference type="FunFam" id="3.40.50.1240:FF:000003">
    <property type="entry name" value="2,3-bisphosphoglycerate-dependent phosphoglycerate mutase"/>
    <property type="match status" value="1"/>
</dbReference>
<dbReference type="Gene3D" id="3.40.50.1240">
    <property type="entry name" value="Phosphoglycerate mutase-like"/>
    <property type="match status" value="1"/>
</dbReference>
<dbReference type="HAMAP" id="MF_01039">
    <property type="entry name" value="PGAM_GpmA"/>
    <property type="match status" value="1"/>
</dbReference>
<dbReference type="InterPro" id="IPR013078">
    <property type="entry name" value="His_Pase_superF_clade-1"/>
</dbReference>
<dbReference type="InterPro" id="IPR029033">
    <property type="entry name" value="His_PPase_superfam"/>
</dbReference>
<dbReference type="InterPro" id="IPR001345">
    <property type="entry name" value="PG/BPGM_mutase_AS"/>
</dbReference>
<dbReference type="InterPro" id="IPR005952">
    <property type="entry name" value="Phosphogly_mut1"/>
</dbReference>
<dbReference type="NCBIfam" id="TIGR01258">
    <property type="entry name" value="pgm_1"/>
    <property type="match status" value="1"/>
</dbReference>
<dbReference type="NCBIfam" id="NF010713">
    <property type="entry name" value="PRK14115.1"/>
    <property type="match status" value="1"/>
</dbReference>
<dbReference type="PANTHER" id="PTHR11931">
    <property type="entry name" value="PHOSPHOGLYCERATE MUTASE"/>
    <property type="match status" value="1"/>
</dbReference>
<dbReference type="Pfam" id="PF00300">
    <property type="entry name" value="His_Phos_1"/>
    <property type="match status" value="1"/>
</dbReference>
<dbReference type="PIRSF" id="PIRSF000709">
    <property type="entry name" value="6PFK_2-Ptase"/>
    <property type="match status" value="1"/>
</dbReference>
<dbReference type="SMART" id="SM00855">
    <property type="entry name" value="PGAM"/>
    <property type="match status" value="1"/>
</dbReference>
<dbReference type="SUPFAM" id="SSF53254">
    <property type="entry name" value="Phosphoglycerate mutase-like"/>
    <property type="match status" value="1"/>
</dbReference>
<dbReference type="PROSITE" id="PS00175">
    <property type="entry name" value="PG_MUTASE"/>
    <property type="match status" value="1"/>
</dbReference>
<comment type="function">
    <text evidence="1">Catalyzes the interconversion of 2-phosphoglycerate and 3-phosphoglycerate.</text>
</comment>
<comment type="catalytic activity">
    <reaction evidence="1">
        <text>(2R)-2-phosphoglycerate = (2R)-3-phosphoglycerate</text>
        <dbReference type="Rhea" id="RHEA:15901"/>
        <dbReference type="ChEBI" id="CHEBI:58272"/>
        <dbReference type="ChEBI" id="CHEBI:58289"/>
        <dbReference type="EC" id="5.4.2.11"/>
    </reaction>
</comment>
<comment type="pathway">
    <text evidence="1">Carbohydrate degradation; glycolysis; pyruvate from D-glyceraldehyde 3-phosphate: step 3/5.</text>
</comment>
<comment type="subunit">
    <text evidence="1">Homodimer.</text>
</comment>
<comment type="similarity">
    <text evidence="1">Belongs to the phosphoglycerate mutase family. BPG-dependent PGAM subfamily.</text>
</comment>
<reference key="1">
    <citation type="journal article" date="2008" name="J. Bacteriol.">
        <title>Insights into the environmental resistance gene pool from the genome sequence of the multidrug-resistant environmental isolate Escherichia coli SMS-3-5.</title>
        <authorList>
            <person name="Fricke W.F."/>
            <person name="Wright M.S."/>
            <person name="Lindell A.H."/>
            <person name="Harkins D.M."/>
            <person name="Baker-Austin C."/>
            <person name="Ravel J."/>
            <person name="Stepanauskas R."/>
        </authorList>
    </citation>
    <scope>NUCLEOTIDE SEQUENCE [LARGE SCALE GENOMIC DNA]</scope>
    <source>
        <strain>SMS-3-5 / SECEC</strain>
    </source>
</reference>